<name>MURI_PSEPK</name>
<evidence type="ECO:0000255" key="1">
    <source>
        <dbReference type="HAMAP-Rule" id="MF_00258"/>
    </source>
</evidence>
<organism>
    <name type="scientific">Pseudomonas putida (strain ATCC 47054 / DSM 6125 / CFBP 8728 / NCIMB 11950 / KT2440)</name>
    <dbReference type="NCBI Taxonomy" id="160488"/>
    <lineage>
        <taxon>Bacteria</taxon>
        <taxon>Pseudomonadati</taxon>
        <taxon>Pseudomonadota</taxon>
        <taxon>Gammaproteobacteria</taxon>
        <taxon>Pseudomonadales</taxon>
        <taxon>Pseudomonadaceae</taxon>
        <taxon>Pseudomonas</taxon>
    </lineage>
</organism>
<sequence>MAERSAPIGVMDSGVGGLSVLAEIQRLLPNETLLYVGDCGHIPYGEKSPDYIRERCRRIAGFFHEQGAKAMVLACNTATVAAVADLRELYPTWPLVGMEPAVKPAAAATRSGVVGVLATTGTLQSAKFAALLDRFANDVQVITQPCPGLVELIEAGDLVSPAVRQLLQGYVQPLLAAGCDTLILGCTHYPFLRPLLAGMVPDDVAIIDTGAAVARQLQRLLGANDLLAEGPAGAARFWTSADPEALRKILPVLWHKSDDVQSFAL</sequence>
<gene>
    <name evidence="1" type="primary">murI</name>
    <name type="ordered locus">PP_0736</name>
</gene>
<protein>
    <recommendedName>
        <fullName evidence="1">Glutamate racemase</fullName>
        <ecNumber evidence="1">5.1.1.3</ecNumber>
    </recommendedName>
</protein>
<dbReference type="EC" id="5.1.1.3" evidence="1"/>
<dbReference type="EMBL" id="AE015451">
    <property type="protein sequence ID" value="AAN66361.1"/>
    <property type="molecule type" value="Genomic_DNA"/>
</dbReference>
<dbReference type="RefSeq" id="NP_742897.1">
    <property type="nucleotide sequence ID" value="NC_002947.4"/>
</dbReference>
<dbReference type="RefSeq" id="WP_010951981.1">
    <property type="nucleotide sequence ID" value="NZ_CP169744.1"/>
</dbReference>
<dbReference type="SMR" id="Q88PW2"/>
<dbReference type="STRING" id="160488.PP_0736"/>
<dbReference type="PaxDb" id="160488-PP_0736"/>
<dbReference type="GeneID" id="83678089"/>
<dbReference type="KEGG" id="ppu:PP_0736"/>
<dbReference type="PATRIC" id="fig|160488.4.peg.788"/>
<dbReference type="eggNOG" id="COG0796">
    <property type="taxonomic scope" value="Bacteria"/>
</dbReference>
<dbReference type="HOGENOM" id="CLU_052344_1_0_6"/>
<dbReference type="OrthoDB" id="9801055at2"/>
<dbReference type="PhylomeDB" id="Q88PW2"/>
<dbReference type="BioCyc" id="PPUT160488:G1G01-811-MONOMER"/>
<dbReference type="UniPathway" id="UPA00219"/>
<dbReference type="Proteomes" id="UP000000556">
    <property type="component" value="Chromosome"/>
</dbReference>
<dbReference type="GO" id="GO:0008881">
    <property type="term" value="F:glutamate racemase activity"/>
    <property type="evidence" value="ECO:0007669"/>
    <property type="project" value="UniProtKB-UniRule"/>
</dbReference>
<dbReference type="GO" id="GO:0071555">
    <property type="term" value="P:cell wall organization"/>
    <property type="evidence" value="ECO:0007669"/>
    <property type="project" value="UniProtKB-KW"/>
</dbReference>
<dbReference type="GO" id="GO:0009252">
    <property type="term" value="P:peptidoglycan biosynthetic process"/>
    <property type="evidence" value="ECO:0007669"/>
    <property type="project" value="UniProtKB-UniRule"/>
</dbReference>
<dbReference type="GO" id="GO:0008360">
    <property type="term" value="P:regulation of cell shape"/>
    <property type="evidence" value="ECO:0007669"/>
    <property type="project" value="UniProtKB-KW"/>
</dbReference>
<dbReference type="FunFam" id="3.40.50.1860:FF:000001">
    <property type="entry name" value="Glutamate racemase"/>
    <property type="match status" value="1"/>
</dbReference>
<dbReference type="Gene3D" id="3.40.50.1860">
    <property type="match status" value="2"/>
</dbReference>
<dbReference type="HAMAP" id="MF_00258">
    <property type="entry name" value="Glu_racemase"/>
    <property type="match status" value="1"/>
</dbReference>
<dbReference type="InterPro" id="IPR015942">
    <property type="entry name" value="Asp/Glu/hydantoin_racemase"/>
</dbReference>
<dbReference type="InterPro" id="IPR001920">
    <property type="entry name" value="Asp/Glu_race"/>
</dbReference>
<dbReference type="InterPro" id="IPR018187">
    <property type="entry name" value="Asp/Glu_racemase_AS_1"/>
</dbReference>
<dbReference type="InterPro" id="IPR033134">
    <property type="entry name" value="Asp/Glu_racemase_AS_2"/>
</dbReference>
<dbReference type="InterPro" id="IPR004391">
    <property type="entry name" value="Glu_race"/>
</dbReference>
<dbReference type="NCBIfam" id="TIGR00067">
    <property type="entry name" value="glut_race"/>
    <property type="match status" value="1"/>
</dbReference>
<dbReference type="PANTHER" id="PTHR21198">
    <property type="entry name" value="GLUTAMATE RACEMASE"/>
    <property type="match status" value="1"/>
</dbReference>
<dbReference type="PANTHER" id="PTHR21198:SF2">
    <property type="entry name" value="GLUTAMATE RACEMASE"/>
    <property type="match status" value="1"/>
</dbReference>
<dbReference type="Pfam" id="PF01177">
    <property type="entry name" value="Asp_Glu_race"/>
    <property type="match status" value="1"/>
</dbReference>
<dbReference type="SUPFAM" id="SSF53681">
    <property type="entry name" value="Aspartate/glutamate racemase"/>
    <property type="match status" value="2"/>
</dbReference>
<dbReference type="PROSITE" id="PS00923">
    <property type="entry name" value="ASP_GLU_RACEMASE_1"/>
    <property type="match status" value="1"/>
</dbReference>
<dbReference type="PROSITE" id="PS00924">
    <property type="entry name" value="ASP_GLU_RACEMASE_2"/>
    <property type="match status" value="1"/>
</dbReference>
<keyword id="KW-0133">Cell shape</keyword>
<keyword id="KW-0961">Cell wall biogenesis/degradation</keyword>
<keyword id="KW-0413">Isomerase</keyword>
<keyword id="KW-0573">Peptidoglycan synthesis</keyword>
<keyword id="KW-1185">Reference proteome</keyword>
<accession>Q88PW2</accession>
<comment type="function">
    <text evidence="1">Provides the (R)-glutamate required for cell wall biosynthesis.</text>
</comment>
<comment type="catalytic activity">
    <reaction evidence="1">
        <text>L-glutamate = D-glutamate</text>
        <dbReference type="Rhea" id="RHEA:12813"/>
        <dbReference type="ChEBI" id="CHEBI:29985"/>
        <dbReference type="ChEBI" id="CHEBI:29986"/>
        <dbReference type="EC" id="5.1.1.3"/>
    </reaction>
</comment>
<comment type="pathway">
    <text evidence="1">Cell wall biogenesis; peptidoglycan biosynthesis.</text>
</comment>
<comment type="similarity">
    <text evidence="1">Belongs to the aspartate/glutamate racemases family.</text>
</comment>
<feature type="chain" id="PRO_0000095498" description="Glutamate racemase">
    <location>
        <begin position="1"/>
        <end position="265"/>
    </location>
</feature>
<feature type="active site" description="Proton donor/acceptor" evidence="1">
    <location>
        <position position="75"/>
    </location>
</feature>
<feature type="active site" description="Proton donor/acceptor" evidence="1">
    <location>
        <position position="186"/>
    </location>
</feature>
<feature type="binding site" evidence="1">
    <location>
        <begin position="12"/>
        <end position="13"/>
    </location>
    <ligand>
        <name>substrate</name>
    </ligand>
</feature>
<feature type="binding site" evidence="1">
    <location>
        <begin position="44"/>
        <end position="45"/>
    </location>
    <ligand>
        <name>substrate</name>
    </ligand>
</feature>
<feature type="binding site" evidence="1">
    <location>
        <begin position="76"/>
        <end position="77"/>
    </location>
    <ligand>
        <name>substrate</name>
    </ligand>
</feature>
<feature type="binding site" evidence="1">
    <location>
        <begin position="187"/>
        <end position="188"/>
    </location>
    <ligand>
        <name>substrate</name>
    </ligand>
</feature>
<reference key="1">
    <citation type="journal article" date="2002" name="Environ. Microbiol.">
        <title>Complete genome sequence and comparative analysis of the metabolically versatile Pseudomonas putida KT2440.</title>
        <authorList>
            <person name="Nelson K.E."/>
            <person name="Weinel C."/>
            <person name="Paulsen I.T."/>
            <person name="Dodson R.J."/>
            <person name="Hilbert H."/>
            <person name="Martins dos Santos V.A.P."/>
            <person name="Fouts D.E."/>
            <person name="Gill S.R."/>
            <person name="Pop M."/>
            <person name="Holmes M."/>
            <person name="Brinkac L.M."/>
            <person name="Beanan M.J."/>
            <person name="DeBoy R.T."/>
            <person name="Daugherty S.C."/>
            <person name="Kolonay J.F."/>
            <person name="Madupu R."/>
            <person name="Nelson W.C."/>
            <person name="White O."/>
            <person name="Peterson J.D."/>
            <person name="Khouri H.M."/>
            <person name="Hance I."/>
            <person name="Chris Lee P."/>
            <person name="Holtzapple E.K."/>
            <person name="Scanlan D."/>
            <person name="Tran K."/>
            <person name="Moazzez A."/>
            <person name="Utterback T.R."/>
            <person name="Rizzo M."/>
            <person name="Lee K."/>
            <person name="Kosack D."/>
            <person name="Moestl D."/>
            <person name="Wedler H."/>
            <person name="Lauber J."/>
            <person name="Stjepandic D."/>
            <person name="Hoheisel J."/>
            <person name="Straetz M."/>
            <person name="Heim S."/>
            <person name="Kiewitz C."/>
            <person name="Eisen J.A."/>
            <person name="Timmis K.N."/>
            <person name="Duesterhoeft A."/>
            <person name="Tuemmler B."/>
            <person name="Fraser C.M."/>
        </authorList>
    </citation>
    <scope>NUCLEOTIDE SEQUENCE [LARGE SCALE GENOMIC DNA]</scope>
    <source>
        <strain>ATCC 47054 / DSM 6125 / CFBP 8728 / NCIMB 11950 / KT2440</strain>
    </source>
</reference>
<proteinExistence type="inferred from homology"/>